<name>COAD_MYCMS</name>
<accession>Q6MTX3</accession>
<gene>
    <name evidence="1" type="primary">coaD</name>
    <name type="synonym">kdtB</name>
    <name type="ordered locus">MSC_0272</name>
</gene>
<sequence>MKTAIYPGSFNPFHNGHLNILKKAILLFDKVYVVVSKNINKSLDPDLQSRVKNIKNLIRDFNNVEIIINENKLTTTIAKELNASFIIRGLRSQTDFEYEIKYYDGFKSLYPNIEVIYFISDYDKRSLSSTILREIEFYKK</sequence>
<evidence type="ECO:0000255" key="1">
    <source>
        <dbReference type="HAMAP-Rule" id="MF_00151"/>
    </source>
</evidence>
<dbReference type="EC" id="2.7.7.3" evidence="1"/>
<dbReference type="EMBL" id="BX293980">
    <property type="protein sequence ID" value="CAE76913.1"/>
    <property type="molecule type" value="Genomic_DNA"/>
</dbReference>
<dbReference type="RefSeq" id="NP_975271.1">
    <property type="nucleotide sequence ID" value="NC_005364.2"/>
</dbReference>
<dbReference type="RefSeq" id="WP_011166469.1">
    <property type="nucleotide sequence ID" value="NC_005364.2"/>
</dbReference>
<dbReference type="SMR" id="Q6MTX3"/>
<dbReference type="STRING" id="272632.MSC_0272"/>
<dbReference type="KEGG" id="mmy:MSC_0272"/>
<dbReference type="PATRIC" id="fig|272632.4.peg.293"/>
<dbReference type="eggNOG" id="COG0669">
    <property type="taxonomic scope" value="Bacteria"/>
</dbReference>
<dbReference type="HOGENOM" id="CLU_100149_2_0_14"/>
<dbReference type="UniPathway" id="UPA00241">
    <property type="reaction ID" value="UER00355"/>
</dbReference>
<dbReference type="Proteomes" id="UP000001016">
    <property type="component" value="Chromosome"/>
</dbReference>
<dbReference type="GO" id="GO:0005737">
    <property type="term" value="C:cytoplasm"/>
    <property type="evidence" value="ECO:0007669"/>
    <property type="project" value="UniProtKB-SubCell"/>
</dbReference>
<dbReference type="GO" id="GO:0005524">
    <property type="term" value="F:ATP binding"/>
    <property type="evidence" value="ECO:0007669"/>
    <property type="project" value="UniProtKB-KW"/>
</dbReference>
<dbReference type="GO" id="GO:0004595">
    <property type="term" value="F:pantetheine-phosphate adenylyltransferase activity"/>
    <property type="evidence" value="ECO:0007669"/>
    <property type="project" value="UniProtKB-UniRule"/>
</dbReference>
<dbReference type="GO" id="GO:0015937">
    <property type="term" value="P:coenzyme A biosynthetic process"/>
    <property type="evidence" value="ECO:0007669"/>
    <property type="project" value="UniProtKB-UniRule"/>
</dbReference>
<dbReference type="Gene3D" id="3.40.50.620">
    <property type="entry name" value="HUPs"/>
    <property type="match status" value="1"/>
</dbReference>
<dbReference type="HAMAP" id="MF_00151">
    <property type="entry name" value="PPAT_bact"/>
    <property type="match status" value="1"/>
</dbReference>
<dbReference type="InterPro" id="IPR004821">
    <property type="entry name" value="Cyt_trans-like"/>
</dbReference>
<dbReference type="InterPro" id="IPR001980">
    <property type="entry name" value="PPAT"/>
</dbReference>
<dbReference type="InterPro" id="IPR014729">
    <property type="entry name" value="Rossmann-like_a/b/a_fold"/>
</dbReference>
<dbReference type="NCBIfam" id="TIGR01510">
    <property type="entry name" value="coaD_prev_kdtB"/>
    <property type="match status" value="1"/>
</dbReference>
<dbReference type="NCBIfam" id="TIGR00125">
    <property type="entry name" value="cyt_tran_rel"/>
    <property type="match status" value="1"/>
</dbReference>
<dbReference type="PANTHER" id="PTHR21342">
    <property type="entry name" value="PHOSPHOPANTETHEINE ADENYLYLTRANSFERASE"/>
    <property type="match status" value="1"/>
</dbReference>
<dbReference type="PANTHER" id="PTHR21342:SF1">
    <property type="entry name" value="PHOSPHOPANTETHEINE ADENYLYLTRANSFERASE"/>
    <property type="match status" value="1"/>
</dbReference>
<dbReference type="Pfam" id="PF01467">
    <property type="entry name" value="CTP_transf_like"/>
    <property type="match status" value="1"/>
</dbReference>
<dbReference type="PRINTS" id="PR01020">
    <property type="entry name" value="LPSBIOSNTHSS"/>
</dbReference>
<dbReference type="SUPFAM" id="SSF52374">
    <property type="entry name" value="Nucleotidylyl transferase"/>
    <property type="match status" value="1"/>
</dbReference>
<reference key="1">
    <citation type="journal article" date="2004" name="Genome Res.">
        <title>The genome sequence of Mycoplasma mycoides subsp. mycoides SC type strain PG1T, the causative agent of contagious bovine pleuropneumonia (CBPP).</title>
        <authorList>
            <person name="Westberg J."/>
            <person name="Persson A."/>
            <person name="Holmberg A."/>
            <person name="Goesmann A."/>
            <person name="Lundeberg J."/>
            <person name="Johansson K.-E."/>
            <person name="Pettersson B."/>
            <person name="Uhlen M."/>
        </authorList>
    </citation>
    <scope>NUCLEOTIDE SEQUENCE [LARGE SCALE GENOMIC DNA]</scope>
    <source>
        <strain>CCUG 32753 / NCTC 10114 / PG1</strain>
    </source>
</reference>
<organism>
    <name type="scientific">Mycoplasma mycoides subsp. mycoides SC (strain CCUG 32753 / NCTC 10114 / PG1)</name>
    <dbReference type="NCBI Taxonomy" id="272632"/>
    <lineage>
        <taxon>Bacteria</taxon>
        <taxon>Bacillati</taxon>
        <taxon>Mycoplasmatota</taxon>
        <taxon>Mollicutes</taxon>
        <taxon>Mycoplasmataceae</taxon>
        <taxon>Mycoplasma</taxon>
    </lineage>
</organism>
<comment type="function">
    <text evidence="1">Reversibly transfers an adenylyl group from ATP to 4'-phosphopantetheine, yielding dephospho-CoA (dPCoA) and pyrophosphate.</text>
</comment>
<comment type="catalytic activity">
    <reaction evidence="1">
        <text>(R)-4'-phosphopantetheine + ATP + H(+) = 3'-dephospho-CoA + diphosphate</text>
        <dbReference type="Rhea" id="RHEA:19801"/>
        <dbReference type="ChEBI" id="CHEBI:15378"/>
        <dbReference type="ChEBI" id="CHEBI:30616"/>
        <dbReference type="ChEBI" id="CHEBI:33019"/>
        <dbReference type="ChEBI" id="CHEBI:57328"/>
        <dbReference type="ChEBI" id="CHEBI:61723"/>
        <dbReference type="EC" id="2.7.7.3"/>
    </reaction>
</comment>
<comment type="cofactor">
    <cofactor evidence="1">
        <name>Mg(2+)</name>
        <dbReference type="ChEBI" id="CHEBI:18420"/>
    </cofactor>
</comment>
<comment type="pathway">
    <text evidence="1">Cofactor biosynthesis; coenzyme A biosynthesis; CoA from (R)-pantothenate: step 4/5.</text>
</comment>
<comment type="subunit">
    <text evidence="1">Homohexamer.</text>
</comment>
<comment type="subcellular location">
    <subcellularLocation>
        <location evidence="1">Cytoplasm</location>
    </subcellularLocation>
</comment>
<comment type="similarity">
    <text evidence="1">Belongs to the bacterial CoaD family.</text>
</comment>
<proteinExistence type="inferred from homology"/>
<keyword id="KW-0067">ATP-binding</keyword>
<keyword id="KW-0173">Coenzyme A biosynthesis</keyword>
<keyword id="KW-0963">Cytoplasm</keyword>
<keyword id="KW-0460">Magnesium</keyword>
<keyword id="KW-0547">Nucleotide-binding</keyword>
<keyword id="KW-0548">Nucleotidyltransferase</keyword>
<keyword id="KW-1185">Reference proteome</keyword>
<keyword id="KW-0808">Transferase</keyword>
<feature type="chain" id="PRO_0000156238" description="Phosphopantetheine adenylyltransferase">
    <location>
        <begin position="1"/>
        <end position="140"/>
    </location>
</feature>
<feature type="binding site" evidence="1">
    <location>
        <begin position="9"/>
        <end position="10"/>
    </location>
    <ligand>
        <name>ATP</name>
        <dbReference type="ChEBI" id="CHEBI:30616"/>
    </ligand>
</feature>
<feature type="binding site" evidence="1">
    <location>
        <position position="9"/>
    </location>
    <ligand>
        <name>substrate</name>
    </ligand>
</feature>
<feature type="binding site" evidence="1">
    <location>
        <position position="17"/>
    </location>
    <ligand>
        <name>ATP</name>
        <dbReference type="ChEBI" id="CHEBI:30616"/>
    </ligand>
</feature>
<feature type="binding site" evidence="1">
    <location>
        <position position="41"/>
    </location>
    <ligand>
        <name>substrate</name>
    </ligand>
</feature>
<feature type="binding site" evidence="1">
    <location>
        <position position="74"/>
    </location>
    <ligand>
        <name>substrate</name>
    </ligand>
</feature>
<feature type="binding site" evidence="1">
    <location>
        <position position="88"/>
    </location>
    <ligand>
        <name>substrate</name>
    </ligand>
</feature>
<feature type="binding site" evidence="1">
    <location>
        <begin position="89"/>
        <end position="91"/>
    </location>
    <ligand>
        <name>ATP</name>
        <dbReference type="ChEBI" id="CHEBI:30616"/>
    </ligand>
</feature>
<feature type="binding site" evidence="1">
    <location>
        <position position="99"/>
    </location>
    <ligand>
        <name>ATP</name>
        <dbReference type="ChEBI" id="CHEBI:30616"/>
    </ligand>
</feature>
<feature type="binding site" evidence="1">
    <location>
        <begin position="124"/>
        <end position="130"/>
    </location>
    <ligand>
        <name>ATP</name>
        <dbReference type="ChEBI" id="CHEBI:30616"/>
    </ligand>
</feature>
<feature type="site" description="Transition state stabilizer" evidence="1">
    <location>
        <position position="17"/>
    </location>
</feature>
<protein>
    <recommendedName>
        <fullName evidence="1">Phosphopantetheine adenylyltransferase</fullName>
        <ecNumber evidence="1">2.7.7.3</ecNumber>
    </recommendedName>
    <alternativeName>
        <fullName evidence="1">Dephospho-CoA pyrophosphorylase</fullName>
    </alternativeName>
    <alternativeName>
        <fullName evidence="1">Pantetheine-phosphate adenylyltransferase</fullName>
        <shortName evidence="1">PPAT</shortName>
    </alternativeName>
</protein>